<organism>
    <name type="scientific">Acropora millepora</name>
    <name type="common">Staghorn coral</name>
    <name type="synonym">Heteropora millepora</name>
    <dbReference type="NCBI Taxonomy" id="45264"/>
    <lineage>
        <taxon>Eukaryota</taxon>
        <taxon>Metazoa</taxon>
        <taxon>Cnidaria</taxon>
        <taxon>Anthozoa</taxon>
        <taxon>Hexacorallia</taxon>
        <taxon>Scleractinia</taxon>
        <taxon>Astrocoeniina</taxon>
        <taxon>Acroporidae</taxon>
        <taxon>Acropora</taxon>
    </lineage>
</organism>
<dbReference type="EMBL" id="HM163215">
    <property type="protein sequence ID" value="ADI50283.1"/>
    <property type="molecule type" value="mRNA"/>
</dbReference>
<dbReference type="OrthoDB" id="5945142at2759"/>
<dbReference type="GO" id="GO:0005576">
    <property type="term" value="C:extracellular region"/>
    <property type="evidence" value="ECO:0007669"/>
    <property type="project" value="UniProtKB-SubCell"/>
</dbReference>
<dbReference type="InterPro" id="IPR055284">
    <property type="entry name" value="Galaxin-like"/>
</dbReference>
<dbReference type="InterPro" id="IPR056601">
    <property type="entry name" value="Galaxin_dom"/>
</dbReference>
<dbReference type="PANTHER" id="PTHR34490:SF1">
    <property type="entry name" value="GALAXIN-LIKE"/>
    <property type="match status" value="1"/>
</dbReference>
<dbReference type="PANTHER" id="PTHR34490">
    <property type="entry name" value="PROTEIN CBG12054-RELATED"/>
    <property type="match status" value="1"/>
</dbReference>
<dbReference type="Pfam" id="PF24748">
    <property type="entry name" value="Galaxin_repeat"/>
    <property type="match status" value="3"/>
</dbReference>
<sequence length="338" mass="35126">MKPSGAFLSLCVVLLSLATHCFSFPSDSLRRDAHSDTNALKSRDRRQAPAPQLSCGGVLYNPAAEMCCHGNVEPRVGASPMCCESSSYDPSTQMCCEGTVSNKPPGIAMCCGSEAYDANSQICCNGNINTKATGPTAQPGCCGEFSYDAASQLCCDSHPVLMVGSLPSCCGRNGYDANTSLCCGDNNVAFVSGPQAACCGDMGYNRNTHLCCDSNVLPMPAMGACCGSWTYSQQTHLCCEGVQLYKGMNTGCCGAVGYNQVNSLCCEGTVVPKSPSKPVCCGTTSYNPLTELCCDGIAFFKTGFIRPTCCGGAIYDATVARCCDGVPTYNVASCAGLA</sequence>
<protein>
    <recommendedName>
        <fullName evidence="7">Galaxin</fullName>
    </recommendedName>
</protein>
<proteinExistence type="evidence at protein level"/>
<reference evidence="7" key="1">
    <citation type="journal article" date="2009" name="BMC Evol. Biol.">
        <title>Differential expression of three galaxin-related genes during settlement and metamorphosis in the scleractinian coral Acropora millepora.</title>
        <authorList>
            <person name="Reyes-Bermudez A."/>
            <person name="Lin Z."/>
            <person name="Hayward D.C."/>
            <person name="Miller D.J."/>
            <person name="Ball E.E."/>
        </authorList>
    </citation>
    <scope>NUCLEOTIDE SEQUENCE [MRNA]</scope>
    <scope>TISSUE SPECIFICITY</scope>
    <scope>DEVELOPMENTAL STAGE</scope>
</reference>
<reference evidence="5" key="2">
    <citation type="journal article" date="2013" name="Mol. Biol. Evol.">
        <title>The skeletal proteome of the coral Acropora millepora: the evolution of calcification by co-option and domain shuffling.</title>
        <authorList>
            <person name="Ramos-Silva P."/>
            <person name="Kaandorp J."/>
            <person name="Huisman L."/>
            <person name="Marie B."/>
            <person name="Zanella-Cleon I."/>
            <person name="Guichard N."/>
            <person name="Miller D.J."/>
            <person name="Marin F."/>
        </authorList>
    </citation>
    <scope>PROTEIN SEQUENCE OF 273-322</scope>
    <scope>TISSUE SPECIFICITY</scope>
    <scope>IDENTIFICATION BY MASS SPECTROMETRY</scope>
</reference>
<comment type="subcellular location">
    <subcellularLocation>
        <location evidence="6">Secreted</location>
    </subcellularLocation>
</comment>
<comment type="tissue specificity">
    <text evidence="3 4">Component of the acid-insoluble organic matrix of the aragonitic skeleton (at protein level). Initially, expressed in an aboral submarginal ring and then along calcifying septa.</text>
</comment>
<comment type="developmental stage">
    <text evidence="3">Weakly expressed in primary, post-settlement polyps and strongly in adult colonies. Not expressed in prawn stage, domut stage and presettlement planulae.</text>
</comment>
<accession>D9IQ16</accession>
<evidence type="ECO:0000255" key="1"/>
<evidence type="ECO:0000256" key="2">
    <source>
        <dbReference type="SAM" id="MobiDB-lite"/>
    </source>
</evidence>
<evidence type="ECO:0000269" key="3">
    <source>
    </source>
</evidence>
<evidence type="ECO:0000269" key="4">
    <source>
    </source>
</evidence>
<evidence type="ECO:0000305" key="5"/>
<evidence type="ECO:0000305" key="6">
    <source>
    </source>
</evidence>
<evidence type="ECO:0000312" key="7">
    <source>
        <dbReference type="EMBL" id="ADI50283.1"/>
    </source>
</evidence>
<name>GXN_ACRMI</name>
<feature type="signal peptide" evidence="1">
    <location>
        <begin position="1"/>
        <end position="23"/>
    </location>
</feature>
<feature type="chain" id="PRO_0000429544" description="Galaxin" evidence="1">
    <location>
        <begin position="24"/>
        <end position="338"/>
    </location>
</feature>
<feature type="region of interest" description="Disordered" evidence="2">
    <location>
        <begin position="30"/>
        <end position="50"/>
    </location>
</feature>
<feature type="compositionally biased region" description="Basic and acidic residues" evidence="2">
    <location>
        <begin position="30"/>
        <end position="47"/>
    </location>
</feature>
<keyword id="KW-0903">Direct protein sequencing</keyword>
<keyword id="KW-0964">Secreted</keyword>
<keyword id="KW-0732">Signal</keyword>